<reference key="1">
    <citation type="journal article" date="1996" name="Science">
        <title>Complete genome sequence of the methanogenic archaeon, Methanococcus jannaschii.</title>
        <authorList>
            <person name="Bult C.J."/>
            <person name="White O."/>
            <person name="Olsen G.J."/>
            <person name="Zhou L."/>
            <person name="Fleischmann R.D."/>
            <person name="Sutton G.G."/>
            <person name="Blake J.A."/>
            <person name="FitzGerald L.M."/>
            <person name="Clayton R.A."/>
            <person name="Gocayne J.D."/>
            <person name="Kerlavage A.R."/>
            <person name="Dougherty B.A."/>
            <person name="Tomb J.-F."/>
            <person name="Adams M.D."/>
            <person name="Reich C.I."/>
            <person name="Overbeek R."/>
            <person name="Kirkness E.F."/>
            <person name="Weinstock K.G."/>
            <person name="Merrick J.M."/>
            <person name="Glodek A."/>
            <person name="Scott J.L."/>
            <person name="Geoghagen N.S.M."/>
            <person name="Weidman J.F."/>
            <person name="Fuhrmann J.L."/>
            <person name="Nguyen D."/>
            <person name="Utterback T.R."/>
            <person name="Kelley J.M."/>
            <person name="Peterson J.D."/>
            <person name="Sadow P.W."/>
            <person name="Hanna M.C."/>
            <person name="Cotton M.D."/>
            <person name="Roberts K.M."/>
            <person name="Hurst M.A."/>
            <person name="Kaine B.P."/>
            <person name="Borodovsky M."/>
            <person name="Klenk H.-P."/>
            <person name="Fraser C.M."/>
            <person name="Smith H.O."/>
            <person name="Woese C.R."/>
            <person name="Venter J.C."/>
        </authorList>
    </citation>
    <scope>NUCLEOTIDE SEQUENCE [LARGE SCALE GENOMIC DNA]</scope>
    <source>
        <strain>ATCC 43067 / DSM 2661 / JAL-1 / JCM 10045 / NBRC 100440</strain>
    </source>
</reference>
<proteinExistence type="predicted"/>
<sequence length="218" mass="23897">MIESITGYLFGIVPFGDIVFGFSEFSIIGFITAVIFTIIVYLTKPEKQLEAQKFKIEDKLEVVTLNELKIRRMMAIVCGIATAGAMLTYDLFDYALFLTLVGIANIGIVSAVKREWVLNASYQYGLIAMIATLPLFGSAGMILAKTGTLSIFELPKIQTSLLFEKIIFAAGMAGETGIAPFYAAKAEMFRAPGSPYILMIHLSSLLLIVRTVEILLTI</sequence>
<protein>
    <recommendedName>
        <fullName>Uncharacterized protein MJ0522</fullName>
    </recommendedName>
</protein>
<organism>
    <name type="scientific">Methanocaldococcus jannaschii (strain ATCC 43067 / DSM 2661 / JAL-1 / JCM 10045 / NBRC 100440)</name>
    <name type="common">Methanococcus jannaschii</name>
    <dbReference type="NCBI Taxonomy" id="243232"/>
    <lineage>
        <taxon>Archaea</taxon>
        <taxon>Methanobacteriati</taxon>
        <taxon>Methanobacteriota</taxon>
        <taxon>Methanomada group</taxon>
        <taxon>Methanococci</taxon>
        <taxon>Methanococcales</taxon>
        <taxon>Methanocaldococcaceae</taxon>
        <taxon>Methanocaldococcus</taxon>
    </lineage>
</organism>
<accession>Q57942</accession>
<keyword id="KW-1003">Cell membrane</keyword>
<keyword id="KW-0472">Membrane</keyword>
<keyword id="KW-1185">Reference proteome</keyword>
<keyword id="KW-0812">Transmembrane</keyword>
<keyword id="KW-1133">Transmembrane helix</keyword>
<comment type="subcellular location">
    <subcellularLocation>
        <location evidence="2">Cell membrane</location>
        <topology evidence="2">Multi-pass membrane protein</topology>
    </subcellularLocation>
</comment>
<dbReference type="EMBL" id="L77117">
    <property type="protein sequence ID" value="AAB98514.1"/>
    <property type="molecule type" value="Genomic_DNA"/>
</dbReference>
<dbReference type="PIR" id="B64365">
    <property type="entry name" value="B64365"/>
</dbReference>
<dbReference type="RefSeq" id="WP_010870025.1">
    <property type="nucleotide sequence ID" value="NC_000909.1"/>
</dbReference>
<dbReference type="SMR" id="Q57942"/>
<dbReference type="FunCoup" id="Q57942">
    <property type="interactions" value="4"/>
</dbReference>
<dbReference type="STRING" id="243232.MJ_0522"/>
<dbReference type="PaxDb" id="243232-MJ_0522"/>
<dbReference type="EnsemblBacteria" id="AAB98514">
    <property type="protein sequence ID" value="AAB98514"/>
    <property type="gene ID" value="MJ_0522"/>
</dbReference>
<dbReference type="GeneID" id="1451386"/>
<dbReference type="KEGG" id="mja:MJ_0522"/>
<dbReference type="eggNOG" id="arCOG04833">
    <property type="taxonomic scope" value="Archaea"/>
</dbReference>
<dbReference type="HOGENOM" id="CLU_1253609_0_0_2"/>
<dbReference type="InParanoid" id="Q57942"/>
<dbReference type="OrthoDB" id="64568at2157"/>
<dbReference type="PhylomeDB" id="Q57942"/>
<dbReference type="Proteomes" id="UP000000805">
    <property type="component" value="Chromosome"/>
</dbReference>
<dbReference type="GO" id="GO:0005886">
    <property type="term" value="C:plasma membrane"/>
    <property type="evidence" value="ECO:0007669"/>
    <property type="project" value="UniProtKB-SubCell"/>
</dbReference>
<dbReference type="InterPro" id="IPR017059">
    <property type="entry name" value="NiFe-hyd_3_EhaH_prd"/>
</dbReference>
<dbReference type="Pfam" id="PF10125">
    <property type="entry name" value="NADHdeh_related"/>
    <property type="match status" value="1"/>
</dbReference>
<dbReference type="PIRSF" id="PIRSF036536">
    <property type="entry name" value="EhaH"/>
    <property type="match status" value="1"/>
</dbReference>
<evidence type="ECO:0000255" key="1"/>
<evidence type="ECO:0000305" key="2"/>
<gene>
    <name type="ordered locus">MJ0522</name>
</gene>
<name>Y522_METJA</name>
<feature type="chain" id="PRO_0000106911" description="Uncharacterized protein MJ0522">
    <location>
        <begin position="1"/>
        <end position="218"/>
    </location>
</feature>
<feature type="transmembrane region" description="Helical" evidence="1">
    <location>
        <begin position="19"/>
        <end position="39"/>
    </location>
</feature>
<feature type="transmembrane region" description="Helical" evidence="1">
    <location>
        <begin position="92"/>
        <end position="112"/>
    </location>
</feature>
<feature type="transmembrane region" description="Helical" evidence="1">
    <location>
        <begin position="124"/>
        <end position="144"/>
    </location>
</feature>
<feature type="transmembrane region" description="Helical" evidence="1">
    <location>
        <begin position="161"/>
        <end position="181"/>
    </location>
</feature>
<feature type="transmembrane region" description="Helical" evidence="1">
    <location>
        <begin position="196"/>
        <end position="216"/>
    </location>
</feature>